<protein>
    <recommendedName>
        <fullName evidence="1">Large ribosomal subunit protein uL13</fullName>
    </recommendedName>
    <alternativeName>
        <fullName evidence="2">50S ribosomal protein L13</fullName>
    </alternativeName>
</protein>
<proteinExistence type="inferred from homology"/>
<reference key="1">
    <citation type="journal article" date="2000" name="Nucleic Acids Res.">
        <title>Genome sequences of Chlamydia trachomatis MoPn and Chlamydia pneumoniae AR39.</title>
        <authorList>
            <person name="Read T.D."/>
            <person name="Brunham R.C."/>
            <person name="Shen C."/>
            <person name="Gill S.R."/>
            <person name="Heidelberg J.F."/>
            <person name="White O."/>
            <person name="Hickey E.K."/>
            <person name="Peterson J.D."/>
            <person name="Utterback T.R."/>
            <person name="Berry K.J."/>
            <person name="Bass S."/>
            <person name="Linher K.D."/>
            <person name="Weidman J.F."/>
            <person name="Khouri H.M."/>
            <person name="Craven B."/>
            <person name="Bowman C."/>
            <person name="Dodson R.J."/>
            <person name="Gwinn M.L."/>
            <person name="Nelson W.C."/>
            <person name="DeBoy R.T."/>
            <person name="Kolonay J.F."/>
            <person name="McClarty G."/>
            <person name="Salzberg S.L."/>
            <person name="Eisen J.A."/>
            <person name="Fraser C.M."/>
        </authorList>
    </citation>
    <scope>NUCLEOTIDE SEQUENCE [LARGE SCALE GENOMIC DNA]</scope>
    <source>
        <strain>MoPn / Nigg</strain>
    </source>
</reference>
<organism>
    <name type="scientific">Chlamydia muridarum (strain MoPn / Nigg)</name>
    <dbReference type="NCBI Taxonomy" id="243161"/>
    <lineage>
        <taxon>Bacteria</taxon>
        <taxon>Pseudomonadati</taxon>
        <taxon>Chlamydiota</taxon>
        <taxon>Chlamydiia</taxon>
        <taxon>Chlamydiales</taxon>
        <taxon>Chlamydiaceae</taxon>
        <taxon>Chlamydia/Chlamydophila group</taxon>
        <taxon>Chlamydia</taxon>
    </lineage>
</organism>
<name>RL13_CHLMU</name>
<sequence>MEKRKDTKTTLAKASDDQNKAWYVINAEGKTLGRLSSEVAKILRGKHKVTFTPHVAMGDGVIVINAEKVRLTGAKRAQKVYHYYTGFISGMREVPFENMIARKPAYVIEHAVKGMLPKTKLGRRQMKSLRVVKGSSYAQYEAIKPIVLDA</sequence>
<comment type="function">
    <text evidence="1">This protein is one of the early assembly proteins of the 50S ribosomal subunit, although it is not seen to bind rRNA by itself. It is important during the early stages of 50S assembly.</text>
</comment>
<comment type="subunit">
    <text evidence="1">Part of the 50S ribosomal subunit.</text>
</comment>
<comment type="similarity">
    <text evidence="1">Belongs to the universal ribosomal protein uL13 family.</text>
</comment>
<dbReference type="EMBL" id="AE002160">
    <property type="protein sequence ID" value="AAF39258.1"/>
    <property type="molecule type" value="Genomic_DNA"/>
</dbReference>
<dbReference type="PIR" id="G81705">
    <property type="entry name" value="G81705"/>
</dbReference>
<dbReference type="RefSeq" id="WP_010230377.1">
    <property type="nucleotide sequence ID" value="NZ_CP063055.1"/>
</dbReference>
<dbReference type="SMR" id="Q9PKR3"/>
<dbReference type="GeneID" id="1245753"/>
<dbReference type="KEGG" id="cmu:TC_0401"/>
<dbReference type="eggNOG" id="COG0102">
    <property type="taxonomic scope" value="Bacteria"/>
</dbReference>
<dbReference type="HOGENOM" id="CLU_082184_2_2_0"/>
<dbReference type="OrthoDB" id="9801330at2"/>
<dbReference type="Proteomes" id="UP000000800">
    <property type="component" value="Chromosome"/>
</dbReference>
<dbReference type="GO" id="GO:0022625">
    <property type="term" value="C:cytosolic large ribosomal subunit"/>
    <property type="evidence" value="ECO:0007669"/>
    <property type="project" value="TreeGrafter"/>
</dbReference>
<dbReference type="GO" id="GO:0003729">
    <property type="term" value="F:mRNA binding"/>
    <property type="evidence" value="ECO:0007669"/>
    <property type="project" value="TreeGrafter"/>
</dbReference>
<dbReference type="GO" id="GO:0003735">
    <property type="term" value="F:structural constituent of ribosome"/>
    <property type="evidence" value="ECO:0007669"/>
    <property type="project" value="InterPro"/>
</dbReference>
<dbReference type="GO" id="GO:0017148">
    <property type="term" value="P:negative regulation of translation"/>
    <property type="evidence" value="ECO:0007669"/>
    <property type="project" value="TreeGrafter"/>
</dbReference>
<dbReference type="GO" id="GO:0006412">
    <property type="term" value="P:translation"/>
    <property type="evidence" value="ECO:0007669"/>
    <property type="project" value="UniProtKB-UniRule"/>
</dbReference>
<dbReference type="CDD" id="cd00392">
    <property type="entry name" value="Ribosomal_L13"/>
    <property type="match status" value="1"/>
</dbReference>
<dbReference type="FunFam" id="3.90.1180.10:FF:000016">
    <property type="entry name" value="50S ribosomal protein L13"/>
    <property type="match status" value="1"/>
</dbReference>
<dbReference type="Gene3D" id="3.90.1180.10">
    <property type="entry name" value="Ribosomal protein L13"/>
    <property type="match status" value="1"/>
</dbReference>
<dbReference type="HAMAP" id="MF_01366">
    <property type="entry name" value="Ribosomal_uL13"/>
    <property type="match status" value="1"/>
</dbReference>
<dbReference type="InterPro" id="IPR005822">
    <property type="entry name" value="Ribosomal_uL13"/>
</dbReference>
<dbReference type="InterPro" id="IPR005823">
    <property type="entry name" value="Ribosomal_uL13_bac-type"/>
</dbReference>
<dbReference type="InterPro" id="IPR023563">
    <property type="entry name" value="Ribosomal_uL13_CS"/>
</dbReference>
<dbReference type="InterPro" id="IPR036899">
    <property type="entry name" value="Ribosomal_uL13_sf"/>
</dbReference>
<dbReference type="NCBIfam" id="TIGR01066">
    <property type="entry name" value="rplM_bact"/>
    <property type="match status" value="1"/>
</dbReference>
<dbReference type="PANTHER" id="PTHR11545:SF2">
    <property type="entry name" value="LARGE RIBOSOMAL SUBUNIT PROTEIN UL13M"/>
    <property type="match status" value="1"/>
</dbReference>
<dbReference type="PANTHER" id="PTHR11545">
    <property type="entry name" value="RIBOSOMAL PROTEIN L13"/>
    <property type="match status" value="1"/>
</dbReference>
<dbReference type="Pfam" id="PF00572">
    <property type="entry name" value="Ribosomal_L13"/>
    <property type="match status" value="1"/>
</dbReference>
<dbReference type="PIRSF" id="PIRSF002181">
    <property type="entry name" value="Ribosomal_L13"/>
    <property type="match status" value="1"/>
</dbReference>
<dbReference type="SUPFAM" id="SSF52161">
    <property type="entry name" value="Ribosomal protein L13"/>
    <property type="match status" value="1"/>
</dbReference>
<dbReference type="PROSITE" id="PS00783">
    <property type="entry name" value="RIBOSOMAL_L13"/>
    <property type="match status" value="1"/>
</dbReference>
<gene>
    <name evidence="1" type="primary">rplM</name>
    <name type="ordered locus">TC_0401</name>
</gene>
<accession>Q9PKR3</accession>
<feature type="chain" id="PRO_0000133730" description="Large ribosomal subunit protein uL13">
    <location>
        <begin position="1"/>
        <end position="150"/>
    </location>
</feature>
<evidence type="ECO:0000255" key="1">
    <source>
        <dbReference type="HAMAP-Rule" id="MF_01366"/>
    </source>
</evidence>
<evidence type="ECO:0000305" key="2"/>
<keyword id="KW-0687">Ribonucleoprotein</keyword>
<keyword id="KW-0689">Ribosomal protein</keyword>